<accession>Q0ICP7</accession>
<sequence>MHILKKPDLTDPKLRAKLAKGMGHNYYGEPAWPNDLLYIFPVVILGTIACIVGLSVLDPAMLGDKADPFATPLEILPEWYLYPVFQILRVVPNKLLGIALQTLVPLGLMLIPFIESFNKFQNPFRRPIAMAVFLFGTATTIYLGIGAAMPIDKSLTLGLF</sequence>
<dbReference type="EMBL" id="CP000435">
    <property type="protein sequence ID" value="ABI47740.1"/>
    <property type="molecule type" value="Genomic_DNA"/>
</dbReference>
<dbReference type="RefSeq" id="WP_006854933.1">
    <property type="nucleotide sequence ID" value="NC_008319.1"/>
</dbReference>
<dbReference type="SMR" id="Q0ICP7"/>
<dbReference type="STRING" id="64471.sync_0550"/>
<dbReference type="KEGG" id="syg:sync_0550"/>
<dbReference type="eggNOG" id="COG1290">
    <property type="taxonomic scope" value="Bacteria"/>
</dbReference>
<dbReference type="HOGENOM" id="CLU_112652_0_0_3"/>
<dbReference type="OrthoDB" id="529454at2"/>
<dbReference type="Proteomes" id="UP000001961">
    <property type="component" value="Chromosome"/>
</dbReference>
<dbReference type="GO" id="GO:0031676">
    <property type="term" value="C:plasma membrane-derived thylakoid membrane"/>
    <property type="evidence" value="ECO:0007669"/>
    <property type="project" value="UniProtKB-SubCell"/>
</dbReference>
<dbReference type="GO" id="GO:0045158">
    <property type="term" value="F:electron transporter, transferring electrons within cytochrome b6/f complex of photosystem II activity"/>
    <property type="evidence" value="ECO:0007669"/>
    <property type="project" value="UniProtKB-UniRule"/>
</dbReference>
<dbReference type="GO" id="GO:0045156">
    <property type="term" value="F:electron transporter, transferring electrons within the cyclic electron transport pathway of photosynthesis activity"/>
    <property type="evidence" value="ECO:0007669"/>
    <property type="project" value="InterPro"/>
</dbReference>
<dbReference type="GO" id="GO:0008121">
    <property type="term" value="F:ubiquinol-cytochrome-c reductase activity"/>
    <property type="evidence" value="ECO:0007669"/>
    <property type="project" value="TreeGrafter"/>
</dbReference>
<dbReference type="GO" id="GO:0009767">
    <property type="term" value="P:photosynthetic electron transport chain"/>
    <property type="evidence" value="ECO:0007669"/>
    <property type="project" value="InterPro"/>
</dbReference>
<dbReference type="CDD" id="cd00290">
    <property type="entry name" value="cytochrome_b_C"/>
    <property type="match status" value="1"/>
</dbReference>
<dbReference type="FunFam" id="1.10.287.980:FF:000001">
    <property type="entry name" value="Cytochrome b6-f complex subunit 4"/>
    <property type="match status" value="1"/>
</dbReference>
<dbReference type="FunFam" id="1.20.5.510:FF:000002">
    <property type="entry name" value="Cytochrome b6-f complex subunit 4"/>
    <property type="match status" value="1"/>
</dbReference>
<dbReference type="Gene3D" id="1.10.287.980">
    <property type="entry name" value="plastocyanin oxidoreductase"/>
    <property type="match status" value="1"/>
</dbReference>
<dbReference type="Gene3D" id="1.20.5.510">
    <property type="entry name" value="Single helix bin"/>
    <property type="match status" value="1"/>
</dbReference>
<dbReference type="HAMAP" id="MF_01344">
    <property type="entry name" value="Cytb6_f_subIV"/>
    <property type="match status" value="1"/>
</dbReference>
<dbReference type="InterPro" id="IPR005798">
    <property type="entry name" value="Cyt_b/b6_C"/>
</dbReference>
<dbReference type="InterPro" id="IPR036150">
    <property type="entry name" value="Cyt_b/b6_C_sf"/>
</dbReference>
<dbReference type="InterPro" id="IPR005870">
    <property type="entry name" value="Cyt_b6/f_cplx_suIV"/>
</dbReference>
<dbReference type="InterPro" id="IPR048260">
    <property type="entry name" value="Cytochrome_b_C_euk/bac"/>
</dbReference>
<dbReference type="NCBIfam" id="TIGR01156">
    <property type="entry name" value="cytb6_f_IV"/>
    <property type="match status" value="1"/>
</dbReference>
<dbReference type="PANTHER" id="PTHR19271">
    <property type="entry name" value="CYTOCHROME B"/>
    <property type="match status" value="1"/>
</dbReference>
<dbReference type="PANTHER" id="PTHR19271:SF41">
    <property type="entry name" value="CYTOCHROME B_B6 C-TERMINAL REGION PROFILE DOMAIN-CONTAINING PROTEIN"/>
    <property type="match status" value="1"/>
</dbReference>
<dbReference type="Pfam" id="PF00032">
    <property type="entry name" value="Cytochrom_B_C"/>
    <property type="match status" value="1"/>
</dbReference>
<dbReference type="PIRSF" id="PIRSF000033">
    <property type="entry name" value="B6f_17K"/>
    <property type="match status" value="1"/>
</dbReference>
<dbReference type="SUPFAM" id="SSF81648">
    <property type="entry name" value="a domain/subunit of cytochrome bc1 complex (Ubiquinol-cytochrome c reductase)"/>
    <property type="match status" value="1"/>
</dbReference>
<dbReference type="PROSITE" id="PS51003">
    <property type="entry name" value="CYTB_CTER"/>
    <property type="match status" value="1"/>
</dbReference>
<evidence type="ECO:0000255" key="1">
    <source>
        <dbReference type="HAMAP-Rule" id="MF_01344"/>
    </source>
</evidence>
<comment type="function">
    <text evidence="1">Component of the cytochrome b6-f complex, which mediates electron transfer between photosystem II (PSII) and photosystem I (PSI), cyclic electron flow around PSI, and state transitions.</text>
</comment>
<comment type="subunit">
    <text evidence="1">The 4 large subunits of the cytochrome b6-f complex are cytochrome b6, subunit IV (17 kDa polypeptide, PetD), cytochrome f and the Rieske protein, while the 4 small subunits are PetG, PetL, PetM and PetN. The complex functions as a dimer.</text>
</comment>
<comment type="subcellular location">
    <subcellularLocation>
        <location evidence="1">Cellular thylakoid membrane</location>
        <topology evidence="1">Multi-pass membrane protein</topology>
    </subcellularLocation>
</comment>
<comment type="similarity">
    <text evidence="1">Belongs to the cytochrome b family. PetD subfamily.</text>
</comment>
<keyword id="KW-0249">Electron transport</keyword>
<keyword id="KW-0472">Membrane</keyword>
<keyword id="KW-0602">Photosynthesis</keyword>
<keyword id="KW-1185">Reference proteome</keyword>
<keyword id="KW-0793">Thylakoid</keyword>
<keyword id="KW-0812">Transmembrane</keyword>
<keyword id="KW-1133">Transmembrane helix</keyword>
<keyword id="KW-0813">Transport</keyword>
<feature type="chain" id="PRO_1000054903" description="Cytochrome b6-f complex subunit 4">
    <location>
        <begin position="1"/>
        <end position="160"/>
    </location>
</feature>
<feature type="transmembrane region" description="Helical" evidence="1">
    <location>
        <begin position="36"/>
        <end position="56"/>
    </location>
</feature>
<feature type="transmembrane region" description="Helical" evidence="1">
    <location>
        <begin position="95"/>
        <end position="115"/>
    </location>
</feature>
<feature type="transmembrane region" description="Helical" evidence="1">
    <location>
        <begin position="128"/>
        <end position="148"/>
    </location>
</feature>
<protein>
    <recommendedName>
        <fullName evidence="1">Cytochrome b6-f complex subunit 4</fullName>
    </recommendedName>
    <alternativeName>
        <fullName evidence="1">17 kDa polypeptide</fullName>
    </alternativeName>
</protein>
<name>PETD_SYNS3</name>
<reference key="1">
    <citation type="journal article" date="2006" name="Proc. Natl. Acad. Sci. U.S.A.">
        <title>Genome sequence of Synechococcus CC9311: insights into adaptation to a coastal environment.</title>
        <authorList>
            <person name="Palenik B."/>
            <person name="Ren Q."/>
            <person name="Dupont C.L."/>
            <person name="Myers G.S."/>
            <person name="Heidelberg J.F."/>
            <person name="Badger J.H."/>
            <person name="Madupu R."/>
            <person name="Nelson W.C."/>
            <person name="Brinkac L.M."/>
            <person name="Dodson R.J."/>
            <person name="Durkin A.S."/>
            <person name="Daugherty S.C."/>
            <person name="Sullivan S.A."/>
            <person name="Khouri H."/>
            <person name="Mohamoud Y."/>
            <person name="Halpin R."/>
            <person name="Paulsen I.T."/>
        </authorList>
    </citation>
    <scope>NUCLEOTIDE SEQUENCE [LARGE SCALE GENOMIC DNA]</scope>
    <source>
        <strain>CC9311</strain>
    </source>
</reference>
<organism>
    <name type="scientific">Synechococcus sp. (strain CC9311)</name>
    <dbReference type="NCBI Taxonomy" id="64471"/>
    <lineage>
        <taxon>Bacteria</taxon>
        <taxon>Bacillati</taxon>
        <taxon>Cyanobacteriota</taxon>
        <taxon>Cyanophyceae</taxon>
        <taxon>Synechococcales</taxon>
        <taxon>Synechococcaceae</taxon>
        <taxon>Synechococcus</taxon>
    </lineage>
</organism>
<gene>
    <name evidence="1" type="primary">petD</name>
    <name type="ordered locus">sync_0550</name>
</gene>
<proteinExistence type="inferred from homology"/>